<sequence length="243" mass="28285">MLTFLIPTAKEMMIPKESHPHLLPQDSQAILKIMAAMTTEDLAKSYRIKEEAAKKEQQRWQDMASQQSLAYPAYQLFNGLMYRHIKRDKLTTQEQAYLTQQVYITSSFYGIIPANHPIAEHRHDFHTRIKIEGQSLKSYWRPCYNQFAKEHPQVISLLSSEFDDVFSKDCKQLWISPKFMAEKEGQFKTHSTISKKARGAFLTACMENNCQTVDSLKSLVFAGFYYHPDLSTDHEFVYIKKEA</sequence>
<dbReference type="EMBL" id="CP000829">
    <property type="protein sequence ID" value="ACI61992.1"/>
    <property type="molecule type" value="Genomic_DNA"/>
</dbReference>
<dbReference type="SMR" id="B5XIZ3"/>
<dbReference type="KEGG" id="soz:Spy49_1742"/>
<dbReference type="HOGENOM" id="CLU_061989_2_1_9"/>
<dbReference type="Proteomes" id="UP000001039">
    <property type="component" value="Chromosome"/>
</dbReference>
<dbReference type="GO" id="GO:0005829">
    <property type="term" value="C:cytosol"/>
    <property type="evidence" value="ECO:0007669"/>
    <property type="project" value="TreeGrafter"/>
</dbReference>
<dbReference type="GO" id="GO:0033194">
    <property type="term" value="P:response to hydroperoxide"/>
    <property type="evidence" value="ECO:0007669"/>
    <property type="project" value="TreeGrafter"/>
</dbReference>
<dbReference type="HAMAP" id="MF_00652">
    <property type="entry name" value="UPF0246"/>
    <property type="match status" value="1"/>
</dbReference>
<dbReference type="InterPro" id="IPR005583">
    <property type="entry name" value="YaaA"/>
</dbReference>
<dbReference type="NCBIfam" id="NF002543">
    <property type="entry name" value="PRK02101.1-4"/>
    <property type="match status" value="1"/>
</dbReference>
<dbReference type="PANTHER" id="PTHR30283:SF4">
    <property type="entry name" value="PEROXIDE STRESS RESISTANCE PROTEIN YAAA"/>
    <property type="match status" value="1"/>
</dbReference>
<dbReference type="PANTHER" id="PTHR30283">
    <property type="entry name" value="PEROXIDE STRESS RESPONSE PROTEIN YAAA"/>
    <property type="match status" value="1"/>
</dbReference>
<dbReference type="Pfam" id="PF03883">
    <property type="entry name" value="H2O2_YaaD"/>
    <property type="match status" value="1"/>
</dbReference>
<name>Y1742_STRPZ</name>
<feature type="chain" id="PRO_1000131151" description="UPF0246 protein Spy49_1742">
    <location>
        <begin position="1"/>
        <end position="243"/>
    </location>
</feature>
<accession>B5XIZ3</accession>
<protein>
    <recommendedName>
        <fullName evidence="1">UPF0246 protein Spy49_1742</fullName>
    </recommendedName>
</protein>
<gene>
    <name type="ordered locus">Spy49_1742</name>
</gene>
<evidence type="ECO:0000255" key="1">
    <source>
        <dbReference type="HAMAP-Rule" id="MF_00652"/>
    </source>
</evidence>
<comment type="similarity">
    <text evidence="1">Belongs to the UPF0246 family.</text>
</comment>
<proteinExistence type="inferred from homology"/>
<reference key="1">
    <citation type="journal article" date="2008" name="J. Bacteriol.">
        <title>Genome sequence of a nephritogenic and highly transformable M49 strain of Streptococcus pyogenes.</title>
        <authorList>
            <person name="McShan W.M."/>
            <person name="Ferretti J.J."/>
            <person name="Karasawa T."/>
            <person name="Suvorov A.N."/>
            <person name="Lin S."/>
            <person name="Qin B."/>
            <person name="Jia H."/>
            <person name="Kenton S."/>
            <person name="Najar F."/>
            <person name="Wu H."/>
            <person name="Scott J."/>
            <person name="Roe B.A."/>
            <person name="Savic D.J."/>
        </authorList>
    </citation>
    <scope>NUCLEOTIDE SEQUENCE [LARGE SCALE GENOMIC DNA]</scope>
    <source>
        <strain>NZ131</strain>
    </source>
</reference>
<organism>
    <name type="scientific">Streptococcus pyogenes serotype M49 (strain NZ131)</name>
    <dbReference type="NCBI Taxonomy" id="471876"/>
    <lineage>
        <taxon>Bacteria</taxon>
        <taxon>Bacillati</taxon>
        <taxon>Bacillota</taxon>
        <taxon>Bacilli</taxon>
        <taxon>Lactobacillales</taxon>
        <taxon>Streptococcaceae</taxon>
        <taxon>Streptococcus</taxon>
    </lineage>
</organism>